<protein>
    <recommendedName>
        <fullName evidence="1">UPF0231 protein YacL</fullName>
    </recommendedName>
</protein>
<evidence type="ECO:0000255" key="1">
    <source>
        <dbReference type="HAMAP-Rule" id="MF_01053"/>
    </source>
</evidence>
<gene>
    <name evidence="1" type="primary">yacL</name>
    <name type="ordered locus">SSPA0159</name>
</gene>
<name>YACL_SALPK</name>
<sequence length="120" mass="13955">MDYEFLRDVTGRVLVRMSMGHEVVGHWFNEEVKDNLSLLDEVEQAARTVKGSERSWQRAGHEYTIWIDGEEVMIRANQLDFSGDEMEEGMSYYDEESLSLCGMEDFLRVVAAYREFVSKA</sequence>
<comment type="similarity">
    <text evidence="1">Belongs to the UPF0231 family.</text>
</comment>
<proteinExistence type="inferred from homology"/>
<dbReference type="EMBL" id="FM200053">
    <property type="protein sequence ID" value="CAR58270.1"/>
    <property type="molecule type" value="Genomic_DNA"/>
</dbReference>
<dbReference type="RefSeq" id="WP_000384313.1">
    <property type="nucleotide sequence ID" value="NC_011147.1"/>
</dbReference>
<dbReference type="SMR" id="B5BLF5"/>
<dbReference type="KEGG" id="sek:SSPA0159"/>
<dbReference type="HOGENOM" id="CLU_139226_0_0_6"/>
<dbReference type="Proteomes" id="UP000001869">
    <property type="component" value="Chromosome"/>
</dbReference>
<dbReference type="HAMAP" id="MF_01053">
    <property type="entry name" value="UPF0231"/>
    <property type="match status" value="1"/>
</dbReference>
<dbReference type="InterPro" id="IPR008249">
    <property type="entry name" value="UPF0231"/>
</dbReference>
<dbReference type="NCBIfam" id="NF003574">
    <property type="entry name" value="PRK05248.1-1"/>
    <property type="match status" value="1"/>
</dbReference>
<dbReference type="NCBIfam" id="NF003576">
    <property type="entry name" value="PRK05248.1-3"/>
    <property type="match status" value="1"/>
</dbReference>
<dbReference type="Pfam" id="PF06062">
    <property type="entry name" value="UPF0231"/>
    <property type="match status" value="1"/>
</dbReference>
<dbReference type="PIRSF" id="PIRSF006287">
    <property type="entry name" value="UCP006287"/>
    <property type="match status" value="1"/>
</dbReference>
<organism>
    <name type="scientific">Salmonella paratyphi A (strain AKU_12601)</name>
    <dbReference type="NCBI Taxonomy" id="554290"/>
    <lineage>
        <taxon>Bacteria</taxon>
        <taxon>Pseudomonadati</taxon>
        <taxon>Pseudomonadota</taxon>
        <taxon>Gammaproteobacteria</taxon>
        <taxon>Enterobacterales</taxon>
        <taxon>Enterobacteriaceae</taxon>
        <taxon>Salmonella</taxon>
    </lineage>
</organism>
<feature type="chain" id="PRO_1000136307" description="UPF0231 protein YacL">
    <location>
        <begin position="1"/>
        <end position="120"/>
    </location>
</feature>
<accession>B5BLF5</accession>
<reference key="1">
    <citation type="journal article" date="2009" name="BMC Genomics">
        <title>Pseudogene accumulation in the evolutionary histories of Salmonella enterica serovars Paratyphi A and Typhi.</title>
        <authorList>
            <person name="Holt K.E."/>
            <person name="Thomson N.R."/>
            <person name="Wain J."/>
            <person name="Langridge G.C."/>
            <person name="Hasan R."/>
            <person name="Bhutta Z.A."/>
            <person name="Quail M.A."/>
            <person name="Norbertczak H."/>
            <person name="Walker D."/>
            <person name="Simmonds M."/>
            <person name="White B."/>
            <person name="Bason N."/>
            <person name="Mungall K."/>
            <person name="Dougan G."/>
            <person name="Parkhill J."/>
        </authorList>
    </citation>
    <scope>NUCLEOTIDE SEQUENCE [LARGE SCALE GENOMIC DNA]</scope>
    <source>
        <strain>AKU_12601</strain>
    </source>
</reference>